<name>KPYK_CLOPE</name>
<feature type="chain" id="PRO_0000112066" description="Pyruvate kinase">
    <location>
        <begin position="1"/>
        <end position="474"/>
    </location>
</feature>
<feature type="binding site" evidence="1">
    <location>
        <position position="32"/>
    </location>
    <ligand>
        <name>substrate</name>
    </ligand>
</feature>
<feature type="binding site" evidence="2">
    <location>
        <begin position="34"/>
        <end position="37"/>
    </location>
    <ligand>
        <name>ATP</name>
        <dbReference type="ChEBI" id="CHEBI:30616"/>
    </ligand>
</feature>
<feature type="binding site" evidence="1">
    <location>
        <position position="34"/>
    </location>
    <ligand>
        <name>K(+)</name>
        <dbReference type="ChEBI" id="CHEBI:29103"/>
    </ligand>
</feature>
<feature type="binding site" evidence="1">
    <location>
        <position position="36"/>
    </location>
    <ligand>
        <name>K(+)</name>
        <dbReference type="ChEBI" id="CHEBI:29103"/>
    </ligand>
</feature>
<feature type="binding site" evidence="1">
    <location>
        <position position="66"/>
    </location>
    <ligand>
        <name>K(+)</name>
        <dbReference type="ChEBI" id="CHEBI:29103"/>
    </ligand>
</feature>
<feature type="binding site" evidence="2">
    <location>
        <position position="73"/>
    </location>
    <ligand>
        <name>ATP</name>
        <dbReference type="ChEBI" id="CHEBI:30616"/>
    </ligand>
</feature>
<feature type="binding site" evidence="2">
    <location>
        <position position="155"/>
    </location>
    <ligand>
        <name>ATP</name>
        <dbReference type="ChEBI" id="CHEBI:30616"/>
    </ligand>
</feature>
<feature type="binding site" evidence="1">
    <location>
        <position position="221"/>
    </location>
    <ligand>
        <name>Mg(2+)</name>
        <dbReference type="ChEBI" id="CHEBI:18420"/>
    </ligand>
</feature>
<feature type="binding site" evidence="1">
    <location>
        <position position="244"/>
    </location>
    <ligand>
        <name>substrate</name>
    </ligand>
</feature>
<feature type="binding site" evidence="1">
    <location>
        <position position="245"/>
    </location>
    <ligand>
        <name>Mg(2+)</name>
        <dbReference type="ChEBI" id="CHEBI:18420"/>
    </ligand>
</feature>
<feature type="binding site" evidence="1">
    <location>
        <position position="245"/>
    </location>
    <ligand>
        <name>substrate</name>
    </ligand>
</feature>
<feature type="binding site" evidence="1">
    <location>
        <position position="277"/>
    </location>
    <ligand>
        <name>substrate</name>
    </ligand>
</feature>
<feature type="site" description="Transition state stabilizer" evidence="1">
    <location>
        <position position="219"/>
    </location>
</feature>
<feature type="sequence conflict" description="In Ref. 2; CAA60217." evidence="3" ref="2">
    <original>E</original>
    <variation>G</variation>
    <location>
        <position position="17"/>
    </location>
</feature>
<feature type="sequence conflict" description="In Ref. 2; CAA60217." evidence="3" ref="2">
    <original>E</original>
    <variation>G</variation>
    <location>
        <position position="45"/>
    </location>
</feature>
<feature type="sequence conflict" description="In Ref. 2; CAA60217." evidence="3" ref="2">
    <original>E</original>
    <variation>G</variation>
    <location>
        <position position="57"/>
    </location>
</feature>
<dbReference type="EC" id="2.7.1.40"/>
<dbReference type="EMBL" id="BA000016">
    <property type="protein sequence ID" value="BAB81855.1"/>
    <property type="molecule type" value="Genomic_DNA"/>
</dbReference>
<dbReference type="EMBL" id="X86495">
    <property type="protein sequence ID" value="CAA60217.1"/>
    <property type="molecule type" value="Genomic_DNA"/>
</dbReference>
<dbReference type="RefSeq" id="WP_011010789.1">
    <property type="nucleotide sequence ID" value="NC_003366.1"/>
</dbReference>
<dbReference type="SMR" id="Q46289"/>
<dbReference type="STRING" id="195102.gene:10491419"/>
<dbReference type="KEGG" id="cpe:CPE2149"/>
<dbReference type="HOGENOM" id="CLU_015439_9_0_9"/>
<dbReference type="UniPathway" id="UPA00109">
    <property type="reaction ID" value="UER00188"/>
</dbReference>
<dbReference type="Proteomes" id="UP000000818">
    <property type="component" value="Chromosome"/>
</dbReference>
<dbReference type="GO" id="GO:0005524">
    <property type="term" value="F:ATP binding"/>
    <property type="evidence" value="ECO:0007669"/>
    <property type="project" value="UniProtKB-KW"/>
</dbReference>
<dbReference type="GO" id="GO:0016301">
    <property type="term" value="F:kinase activity"/>
    <property type="evidence" value="ECO:0007669"/>
    <property type="project" value="UniProtKB-KW"/>
</dbReference>
<dbReference type="GO" id="GO:0000287">
    <property type="term" value="F:magnesium ion binding"/>
    <property type="evidence" value="ECO:0007669"/>
    <property type="project" value="InterPro"/>
</dbReference>
<dbReference type="GO" id="GO:0030955">
    <property type="term" value="F:potassium ion binding"/>
    <property type="evidence" value="ECO:0007669"/>
    <property type="project" value="InterPro"/>
</dbReference>
<dbReference type="GO" id="GO:0004743">
    <property type="term" value="F:pyruvate kinase activity"/>
    <property type="evidence" value="ECO:0007669"/>
    <property type="project" value="UniProtKB-EC"/>
</dbReference>
<dbReference type="FunFam" id="2.40.33.10:FF:000001">
    <property type="entry name" value="Pyruvate kinase"/>
    <property type="match status" value="1"/>
</dbReference>
<dbReference type="FunFam" id="3.20.20.60:FF:000001">
    <property type="entry name" value="Pyruvate kinase"/>
    <property type="match status" value="1"/>
</dbReference>
<dbReference type="Gene3D" id="3.20.20.60">
    <property type="entry name" value="Phosphoenolpyruvate-binding domains"/>
    <property type="match status" value="1"/>
</dbReference>
<dbReference type="Gene3D" id="2.40.33.10">
    <property type="entry name" value="PK beta-barrel domain-like"/>
    <property type="match status" value="1"/>
</dbReference>
<dbReference type="Gene3D" id="3.40.1380.20">
    <property type="entry name" value="Pyruvate kinase, C-terminal domain"/>
    <property type="match status" value="1"/>
</dbReference>
<dbReference type="InterPro" id="IPR001697">
    <property type="entry name" value="Pyr_Knase"/>
</dbReference>
<dbReference type="InterPro" id="IPR015813">
    <property type="entry name" value="Pyrv/PenolPyrv_kinase-like_dom"/>
</dbReference>
<dbReference type="InterPro" id="IPR040442">
    <property type="entry name" value="Pyrv_kinase-like_dom_sf"/>
</dbReference>
<dbReference type="InterPro" id="IPR011037">
    <property type="entry name" value="Pyrv_Knase-like_insert_dom_sf"/>
</dbReference>
<dbReference type="InterPro" id="IPR018209">
    <property type="entry name" value="Pyrv_Knase_AS"/>
</dbReference>
<dbReference type="InterPro" id="IPR015793">
    <property type="entry name" value="Pyrv_Knase_brl"/>
</dbReference>
<dbReference type="InterPro" id="IPR015795">
    <property type="entry name" value="Pyrv_Knase_C"/>
</dbReference>
<dbReference type="InterPro" id="IPR036918">
    <property type="entry name" value="Pyrv_Knase_C_sf"/>
</dbReference>
<dbReference type="InterPro" id="IPR015806">
    <property type="entry name" value="Pyrv_Knase_insert_dom_sf"/>
</dbReference>
<dbReference type="NCBIfam" id="NF004491">
    <property type="entry name" value="PRK05826.1"/>
    <property type="match status" value="1"/>
</dbReference>
<dbReference type="NCBIfam" id="NF004978">
    <property type="entry name" value="PRK06354.1"/>
    <property type="match status" value="1"/>
</dbReference>
<dbReference type="NCBIfam" id="TIGR01064">
    <property type="entry name" value="pyruv_kin"/>
    <property type="match status" value="1"/>
</dbReference>
<dbReference type="PANTHER" id="PTHR11817">
    <property type="entry name" value="PYRUVATE KINASE"/>
    <property type="match status" value="1"/>
</dbReference>
<dbReference type="Pfam" id="PF00224">
    <property type="entry name" value="PK"/>
    <property type="match status" value="1"/>
</dbReference>
<dbReference type="Pfam" id="PF02887">
    <property type="entry name" value="PK_C"/>
    <property type="match status" value="1"/>
</dbReference>
<dbReference type="PRINTS" id="PR01050">
    <property type="entry name" value="PYRUVTKNASE"/>
</dbReference>
<dbReference type="SUPFAM" id="SSF51621">
    <property type="entry name" value="Phosphoenolpyruvate/pyruvate domain"/>
    <property type="match status" value="1"/>
</dbReference>
<dbReference type="SUPFAM" id="SSF50800">
    <property type="entry name" value="PK beta-barrel domain-like"/>
    <property type="match status" value="1"/>
</dbReference>
<dbReference type="SUPFAM" id="SSF52935">
    <property type="entry name" value="PK C-terminal domain-like"/>
    <property type="match status" value="1"/>
</dbReference>
<dbReference type="PROSITE" id="PS00110">
    <property type="entry name" value="PYRUVATE_KINASE"/>
    <property type="match status" value="1"/>
</dbReference>
<protein>
    <recommendedName>
        <fullName>Pyruvate kinase</fullName>
        <shortName>PK</shortName>
        <ecNumber>2.7.1.40</ecNumber>
    </recommendedName>
</protein>
<comment type="catalytic activity">
    <reaction>
        <text>pyruvate + ATP = phosphoenolpyruvate + ADP + H(+)</text>
        <dbReference type="Rhea" id="RHEA:18157"/>
        <dbReference type="ChEBI" id="CHEBI:15361"/>
        <dbReference type="ChEBI" id="CHEBI:15378"/>
        <dbReference type="ChEBI" id="CHEBI:30616"/>
        <dbReference type="ChEBI" id="CHEBI:58702"/>
        <dbReference type="ChEBI" id="CHEBI:456216"/>
        <dbReference type="EC" id="2.7.1.40"/>
    </reaction>
</comment>
<comment type="cofactor">
    <cofactor evidence="1">
        <name>Mg(2+)</name>
        <dbReference type="ChEBI" id="CHEBI:18420"/>
    </cofactor>
</comment>
<comment type="cofactor">
    <cofactor evidence="1">
        <name>K(+)</name>
        <dbReference type="ChEBI" id="CHEBI:29103"/>
    </cofactor>
</comment>
<comment type="pathway">
    <text>Carbohydrate degradation; glycolysis; pyruvate from D-glyceraldehyde 3-phosphate: step 5/5.</text>
</comment>
<comment type="subunit">
    <text evidence="1">Homotetramer.</text>
</comment>
<comment type="similarity">
    <text evidence="3">Belongs to the pyruvate kinase family.</text>
</comment>
<proteinExistence type="inferred from homology"/>
<organism>
    <name type="scientific">Clostridium perfringens (strain 13 / Type A)</name>
    <dbReference type="NCBI Taxonomy" id="195102"/>
    <lineage>
        <taxon>Bacteria</taxon>
        <taxon>Bacillati</taxon>
        <taxon>Bacillota</taxon>
        <taxon>Clostridia</taxon>
        <taxon>Eubacteriales</taxon>
        <taxon>Clostridiaceae</taxon>
        <taxon>Clostridium</taxon>
    </lineage>
</organism>
<keyword id="KW-0067">ATP-binding</keyword>
<keyword id="KW-0324">Glycolysis</keyword>
<keyword id="KW-0418">Kinase</keyword>
<keyword id="KW-0460">Magnesium</keyword>
<keyword id="KW-0479">Metal-binding</keyword>
<keyword id="KW-0547">Nucleotide-binding</keyword>
<keyword id="KW-0630">Potassium</keyword>
<keyword id="KW-0670">Pyruvate</keyword>
<keyword id="KW-1185">Reference proteome</keyword>
<keyword id="KW-0808">Transferase</keyword>
<reference key="1">
    <citation type="journal article" date="2002" name="Proc. Natl. Acad. Sci. U.S.A.">
        <title>Complete genome sequence of Clostridium perfringens, an anaerobic flesh-eater.</title>
        <authorList>
            <person name="Shimizu T."/>
            <person name="Ohtani K."/>
            <person name="Hirakawa H."/>
            <person name="Ohshima K."/>
            <person name="Yamashita A."/>
            <person name="Shiba T."/>
            <person name="Ogasawara N."/>
            <person name="Hattori M."/>
            <person name="Kuhara S."/>
            <person name="Hayashi H."/>
        </authorList>
    </citation>
    <scope>NUCLEOTIDE SEQUENCE [LARGE SCALE GENOMIC DNA]</scope>
    <source>
        <strain>13 / Type A</strain>
    </source>
</reference>
<reference key="2">
    <citation type="journal article" date="1995" name="J. Bacteriol.">
        <title>Rapid expansion of the physical and genetic map of the chromosome of Clostridium perfringens CPN50.</title>
        <authorList>
            <person name="Katayama S."/>
            <person name="Dupuy B."/>
            <person name="Garnier T."/>
            <person name="Cole S.T."/>
        </authorList>
    </citation>
    <scope>NUCLEOTIDE SEQUENCE [GENOMIC DNA] OF 1-72</scope>
    <source>
        <strain>CPN50</strain>
    </source>
</reference>
<evidence type="ECO:0000250" key="1"/>
<evidence type="ECO:0000250" key="2">
    <source>
        <dbReference type="UniProtKB" id="P14618"/>
    </source>
</evidence>
<evidence type="ECO:0000305" key="3"/>
<accession>Q46289</accession>
<gene>
    <name type="primary">pykF</name>
    <name type="ordered locus">CPE2149</name>
</gene>
<sequence>MQKTKMIFTIGPSSDSEEILREFIRIGMNAARLNFSHGDHASHKEKIELIKRLRKEEKSATAILLDIKGPKIRTYNFKNGEAELKNGDEFTFSCGDEILGDNTKCSISYKELYEDIKPGGSILVDDGLLEFKVKEVRGTDIICEVIEGGTIKDHKGVNVPNVPIKLPAVTEKDRSDLIFGCEMEVDFVAASFIRKPEDVLEVREILDSHGGKDIKIISKIESQEGVDNIKEIIKVTDGVMVARGDMGVEIPIENVPIIQKNIIKKCNQAGKIVITATQMLDSMIRNPRPTRAEASDVCNAIFDGTDAIMLSGESASGSFPIEAAMTMSRIAKKAEANLDYNYLLRRLKDPNPNPDAFADAISYSASKTASKFPTKAIVAATQTGSTAKILSKYKPSCPIIAITPYEKVRRSLALNFGIISKKCAYFNSTDEIIEEARKVAKEFEIAETGDNIMVAAGFPTSITGGTNMLKIEKI</sequence>